<name>RS7_MYCPN</name>
<organism>
    <name type="scientific">Mycoplasma pneumoniae (strain ATCC 29342 / M129 / Subtype 1)</name>
    <name type="common">Mycoplasmoides pneumoniae</name>
    <dbReference type="NCBI Taxonomy" id="272634"/>
    <lineage>
        <taxon>Bacteria</taxon>
        <taxon>Bacillati</taxon>
        <taxon>Mycoplasmatota</taxon>
        <taxon>Mycoplasmoidales</taxon>
        <taxon>Mycoplasmoidaceae</taxon>
        <taxon>Mycoplasmoides</taxon>
    </lineage>
</organism>
<protein>
    <recommendedName>
        <fullName evidence="1">Small ribosomal subunit protein uS7</fullName>
    </recommendedName>
    <alternativeName>
        <fullName evidence="2">30S ribosomal protein S7</fullName>
    </alternativeName>
</protein>
<reference key="1">
    <citation type="journal article" date="1996" name="Nucleic Acids Res.">
        <title>Complete sequence analysis of the genome of the bacterium Mycoplasma pneumoniae.</title>
        <authorList>
            <person name="Himmelreich R."/>
            <person name="Hilbert H."/>
            <person name="Plagens H."/>
            <person name="Pirkl E."/>
            <person name="Li B.-C."/>
            <person name="Herrmann R."/>
        </authorList>
    </citation>
    <scope>NUCLEOTIDE SEQUENCE [LARGE SCALE GENOMIC DNA]</scope>
    <source>
        <strain>ATCC 29342 / M129 / Subtype 1</strain>
    </source>
</reference>
<dbReference type="EMBL" id="U00089">
    <property type="protein sequence ID" value="AAB96253.1"/>
    <property type="molecule type" value="Genomic_DNA"/>
</dbReference>
<dbReference type="PIR" id="S73931">
    <property type="entry name" value="S73931"/>
</dbReference>
<dbReference type="RefSeq" id="NP_109914.1">
    <property type="nucleotide sequence ID" value="NC_000912.1"/>
</dbReference>
<dbReference type="RefSeq" id="WP_010874583.1">
    <property type="nucleotide sequence ID" value="NZ_OU342337.1"/>
</dbReference>
<dbReference type="PDB" id="7OOC">
    <property type="method" value="EM"/>
    <property type="resolution" value="3.70 A"/>
    <property type="chains" value="F=1-155"/>
</dbReference>
<dbReference type="PDB" id="7P6Z">
    <property type="method" value="EM"/>
    <property type="resolution" value="3.50 A"/>
    <property type="chains" value="F=1-155"/>
</dbReference>
<dbReference type="PDB" id="7PAH">
    <property type="method" value="EM"/>
    <property type="resolution" value="9.50 A"/>
    <property type="chains" value="F=1-155"/>
</dbReference>
<dbReference type="PDB" id="7PAI">
    <property type="method" value="EM"/>
    <property type="resolution" value="6.70 A"/>
    <property type="chains" value="F=1-155"/>
</dbReference>
<dbReference type="PDB" id="7PAJ">
    <property type="method" value="EM"/>
    <property type="resolution" value="7.30 A"/>
    <property type="chains" value="F=1-155"/>
</dbReference>
<dbReference type="PDB" id="7PAK">
    <property type="method" value="EM"/>
    <property type="resolution" value="5.30 A"/>
    <property type="chains" value="F=1-155"/>
</dbReference>
<dbReference type="PDB" id="7PAL">
    <property type="method" value="EM"/>
    <property type="resolution" value="4.70 A"/>
    <property type="chains" value="F=1-155"/>
</dbReference>
<dbReference type="PDB" id="7PAM">
    <property type="method" value="EM"/>
    <property type="resolution" value="6.80 A"/>
    <property type="chains" value="F=1-155"/>
</dbReference>
<dbReference type="PDB" id="7PAN">
    <property type="method" value="EM"/>
    <property type="resolution" value="9.70 A"/>
    <property type="chains" value="F=1-155"/>
</dbReference>
<dbReference type="PDB" id="7PAO">
    <property type="method" value="EM"/>
    <property type="resolution" value="7.00 A"/>
    <property type="chains" value="F=1-155"/>
</dbReference>
<dbReference type="PDB" id="7PAQ">
    <property type="method" value="EM"/>
    <property type="resolution" value="8.90 A"/>
    <property type="chains" value="F=1-155"/>
</dbReference>
<dbReference type="PDB" id="7PAR">
    <property type="method" value="EM"/>
    <property type="resolution" value="8.20 A"/>
    <property type="chains" value="F=1-155"/>
</dbReference>
<dbReference type="PDB" id="7PAS">
    <property type="method" value="EM"/>
    <property type="resolution" value="16.00 A"/>
    <property type="chains" value="F=1-155"/>
</dbReference>
<dbReference type="PDB" id="7PH9">
    <property type="method" value="EM"/>
    <property type="resolution" value="8.70 A"/>
    <property type="chains" value="F=1-155"/>
</dbReference>
<dbReference type="PDB" id="7PHA">
    <property type="method" value="EM"/>
    <property type="resolution" value="8.50 A"/>
    <property type="chains" value="F=1-155"/>
</dbReference>
<dbReference type="PDB" id="7PHB">
    <property type="method" value="EM"/>
    <property type="resolution" value="4.90 A"/>
    <property type="chains" value="F=1-155"/>
</dbReference>
<dbReference type="PDB" id="7PHC">
    <property type="method" value="EM"/>
    <property type="resolution" value="9.90 A"/>
    <property type="chains" value="F=1-155"/>
</dbReference>
<dbReference type="PDB" id="7PI8">
    <property type="method" value="EM"/>
    <property type="resolution" value="8.90 A"/>
    <property type="chains" value="F=1-155"/>
</dbReference>
<dbReference type="PDB" id="7PI9">
    <property type="method" value="EM"/>
    <property type="resolution" value="6.30 A"/>
    <property type="chains" value="F=1-155"/>
</dbReference>
<dbReference type="PDB" id="7PIA">
    <property type="method" value="EM"/>
    <property type="resolution" value="13.60 A"/>
    <property type="chains" value="F=1-155"/>
</dbReference>
<dbReference type="PDB" id="7PIB">
    <property type="method" value="EM"/>
    <property type="resolution" value="4.70 A"/>
    <property type="chains" value="F=1-155"/>
</dbReference>
<dbReference type="PDB" id="7PIC">
    <property type="method" value="EM"/>
    <property type="resolution" value="9.10 A"/>
    <property type="chains" value="F=1-155"/>
</dbReference>
<dbReference type="PDB" id="7PIO">
    <property type="method" value="EM"/>
    <property type="resolution" value="9.50 A"/>
    <property type="chains" value="F=1-155"/>
</dbReference>
<dbReference type="PDB" id="7PIP">
    <property type="method" value="EM"/>
    <property type="resolution" value="9.30 A"/>
    <property type="chains" value="F=1-155"/>
</dbReference>
<dbReference type="PDB" id="7PIQ">
    <property type="method" value="EM"/>
    <property type="resolution" value="9.70 A"/>
    <property type="chains" value="F=1-155"/>
</dbReference>
<dbReference type="PDB" id="7PIR">
    <property type="method" value="EM"/>
    <property type="resolution" value="12.10 A"/>
    <property type="chains" value="F=1-155"/>
</dbReference>
<dbReference type="PDB" id="7PIS">
    <property type="method" value="EM"/>
    <property type="resolution" value="15.00 A"/>
    <property type="chains" value="F=1-155"/>
</dbReference>
<dbReference type="PDB" id="7PIT">
    <property type="method" value="EM"/>
    <property type="resolution" value="5.70 A"/>
    <property type="chains" value="F=1-155"/>
</dbReference>
<dbReference type="PDB" id="8P6P">
    <property type="method" value="EM"/>
    <property type="resolution" value="3.20 A"/>
    <property type="chains" value="F=1-155"/>
</dbReference>
<dbReference type="PDB" id="8P7X">
    <property type="method" value="EM"/>
    <property type="resolution" value="3.03 A"/>
    <property type="chains" value="F=1-155"/>
</dbReference>
<dbReference type="PDB" id="8P7Y">
    <property type="method" value="EM"/>
    <property type="resolution" value="3.70 A"/>
    <property type="chains" value="F=1-155"/>
</dbReference>
<dbReference type="PDB" id="8P8V">
    <property type="method" value="EM"/>
    <property type="resolution" value="8.70 A"/>
    <property type="chains" value="F=1-155"/>
</dbReference>
<dbReference type="PDB" id="8P8W">
    <property type="method" value="EM"/>
    <property type="resolution" value="8.70 A"/>
    <property type="chains" value="F=1-155"/>
</dbReference>
<dbReference type="PDBsum" id="7OOC"/>
<dbReference type="PDBsum" id="7P6Z"/>
<dbReference type="PDBsum" id="7PAH"/>
<dbReference type="PDBsum" id="7PAI"/>
<dbReference type="PDBsum" id="7PAJ"/>
<dbReference type="PDBsum" id="7PAK"/>
<dbReference type="PDBsum" id="7PAL"/>
<dbReference type="PDBsum" id="7PAM"/>
<dbReference type="PDBsum" id="7PAN"/>
<dbReference type="PDBsum" id="7PAO"/>
<dbReference type="PDBsum" id="7PAQ"/>
<dbReference type="PDBsum" id="7PAR"/>
<dbReference type="PDBsum" id="7PAS"/>
<dbReference type="PDBsum" id="7PH9"/>
<dbReference type="PDBsum" id="7PHA"/>
<dbReference type="PDBsum" id="7PHB"/>
<dbReference type="PDBsum" id="7PHC"/>
<dbReference type="PDBsum" id="7PI8"/>
<dbReference type="PDBsum" id="7PI9"/>
<dbReference type="PDBsum" id="7PIA"/>
<dbReference type="PDBsum" id="7PIB"/>
<dbReference type="PDBsum" id="7PIC"/>
<dbReference type="PDBsum" id="7PIO"/>
<dbReference type="PDBsum" id="7PIP"/>
<dbReference type="PDBsum" id="7PIQ"/>
<dbReference type="PDBsum" id="7PIR"/>
<dbReference type="PDBsum" id="7PIS"/>
<dbReference type="PDBsum" id="7PIT"/>
<dbReference type="PDBsum" id="8P6P"/>
<dbReference type="PDBsum" id="8P7X"/>
<dbReference type="PDBsum" id="8P7Y"/>
<dbReference type="PDBsum" id="8P8V"/>
<dbReference type="PDBsum" id="8P8W"/>
<dbReference type="EMDB" id="EMD-13234"/>
<dbReference type="EMDB" id="EMD-13272"/>
<dbReference type="EMDB" id="EMD-13273"/>
<dbReference type="EMDB" id="EMD-13274"/>
<dbReference type="EMDB" id="EMD-13275"/>
<dbReference type="EMDB" id="EMD-13276"/>
<dbReference type="EMDB" id="EMD-13277"/>
<dbReference type="EMDB" id="EMD-13278"/>
<dbReference type="EMDB" id="EMD-13279"/>
<dbReference type="EMDB" id="EMD-13280"/>
<dbReference type="EMDB" id="EMD-13281"/>
<dbReference type="EMDB" id="EMD-13282"/>
<dbReference type="EMDB" id="EMD-13410"/>
<dbReference type="EMDB" id="EMD-13411"/>
<dbReference type="EMDB" id="EMD-13412"/>
<dbReference type="EMDB" id="EMD-13413"/>
<dbReference type="EMDB" id="EMD-13432"/>
<dbReference type="EMDB" id="EMD-13433"/>
<dbReference type="EMDB" id="EMD-13434"/>
<dbReference type="EMDB" id="EMD-13435"/>
<dbReference type="EMDB" id="EMD-13436"/>
<dbReference type="EMDB" id="EMD-13445"/>
<dbReference type="EMDB" id="EMD-13446"/>
<dbReference type="EMDB" id="EMD-13447"/>
<dbReference type="EMDB" id="EMD-13448"/>
<dbReference type="EMDB" id="EMD-13449"/>
<dbReference type="EMDB" id="EMD-13450"/>
<dbReference type="SMR" id="P75545"/>
<dbReference type="IntAct" id="P75545">
    <property type="interactions" value="18"/>
</dbReference>
<dbReference type="STRING" id="272634.MPN_226"/>
<dbReference type="EnsemblBacteria" id="AAB96253">
    <property type="protein sequence ID" value="AAB96253"/>
    <property type="gene ID" value="MPN_226"/>
</dbReference>
<dbReference type="KEGG" id="mpn:MPN_226"/>
<dbReference type="PATRIC" id="fig|272634.6.peg.245"/>
<dbReference type="HOGENOM" id="CLU_072226_1_1_14"/>
<dbReference type="OrthoDB" id="9807653at2"/>
<dbReference type="BioCyc" id="MPNE272634:G1GJ3-363-MONOMER"/>
<dbReference type="Proteomes" id="UP000000808">
    <property type="component" value="Chromosome"/>
</dbReference>
<dbReference type="GO" id="GO:0015935">
    <property type="term" value="C:small ribosomal subunit"/>
    <property type="evidence" value="ECO:0007669"/>
    <property type="project" value="InterPro"/>
</dbReference>
<dbReference type="GO" id="GO:0019843">
    <property type="term" value="F:rRNA binding"/>
    <property type="evidence" value="ECO:0007669"/>
    <property type="project" value="UniProtKB-UniRule"/>
</dbReference>
<dbReference type="GO" id="GO:0003735">
    <property type="term" value="F:structural constituent of ribosome"/>
    <property type="evidence" value="ECO:0007669"/>
    <property type="project" value="InterPro"/>
</dbReference>
<dbReference type="GO" id="GO:0000049">
    <property type="term" value="F:tRNA binding"/>
    <property type="evidence" value="ECO:0007669"/>
    <property type="project" value="UniProtKB-UniRule"/>
</dbReference>
<dbReference type="GO" id="GO:0006412">
    <property type="term" value="P:translation"/>
    <property type="evidence" value="ECO:0007669"/>
    <property type="project" value="UniProtKB-UniRule"/>
</dbReference>
<dbReference type="CDD" id="cd14869">
    <property type="entry name" value="uS7_Bacteria"/>
    <property type="match status" value="1"/>
</dbReference>
<dbReference type="FunFam" id="1.10.455.10:FF:000001">
    <property type="entry name" value="30S ribosomal protein S7"/>
    <property type="match status" value="1"/>
</dbReference>
<dbReference type="Gene3D" id="1.10.455.10">
    <property type="entry name" value="Ribosomal protein S7 domain"/>
    <property type="match status" value="1"/>
</dbReference>
<dbReference type="HAMAP" id="MF_00480_B">
    <property type="entry name" value="Ribosomal_uS7_B"/>
    <property type="match status" value="1"/>
</dbReference>
<dbReference type="InterPro" id="IPR000235">
    <property type="entry name" value="Ribosomal_uS7"/>
</dbReference>
<dbReference type="InterPro" id="IPR005717">
    <property type="entry name" value="Ribosomal_uS7_bac/org-type"/>
</dbReference>
<dbReference type="InterPro" id="IPR020606">
    <property type="entry name" value="Ribosomal_uS7_CS"/>
</dbReference>
<dbReference type="InterPro" id="IPR023798">
    <property type="entry name" value="Ribosomal_uS7_dom"/>
</dbReference>
<dbReference type="InterPro" id="IPR036823">
    <property type="entry name" value="Ribosomal_uS7_dom_sf"/>
</dbReference>
<dbReference type="NCBIfam" id="TIGR01029">
    <property type="entry name" value="rpsG_bact"/>
    <property type="match status" value="1"/>
</dbReference>
<dbReference type="PANTHER" id="PTHR11205">
    <property type="entry name" value="RIBOSOMAL PROTEIN S7"/>
    <property type="match status" value="1"/>
</dbReference>
<dbReference type="Pfam" id="PF00177">
    <property type="entry name" value="Ribosomal_S7"/>
    <property type="match status" value="1"/>
</dbReference>
<dbReference type="PIRSF" id="PIRSF002122">
    <property type="entry name" value="RPS7p_RPS7a_RPS5e_RPS7o"/>
    <property type="match status" value="1"/>
</dbReference>
<dbReference type="SUPFAM" id="SSF47973">
    <property type="entry name" value="Ribosomal protein S7"/>
    <property type="match status" value="1"/>
</dbReference>
<dbReference type="PROSITE" id="PS00052">
    <property type="entry name" value="RIBOSOMAL_S7"/>
    <property type="match status" value="1"/>
</dbReference>
<comment type="function">
    <text evidence="1">One of the primary rRNA binding proteins, it binds directly to 16S rRNA where it nucleates assembly of the head domain of the 30S subunit. Is located at the subunit interface close to the decoding center, probably blocks exit of the E-site tRNA.</text>
</comment>
<comment type="subunit">
    <text evidence="1">Part of the 30S ribosomal subunit. Contacts proteins S9 and S11.</text>
</comment>
<comment type="similarity">
    <text evidence="1">Belongs to the universal ribosomal protein uS7 family.</text>
</comment>
<keyword id="KW-0002">3D-structure</keyword>
<keyword id="KW-1185">Reference proteome</keyword>
<keyword id="KW-0687">Ribonucleoprotein</keyword>
<keyword id="KW-0689">Ribosomal protein</keyword>
<keyword id="KW-0694">RNA-binding</keyword>
<keyword id="KW-0699">rRNA-binding</keyword>
<keyword id="KW-0820">tRNA-binding</keyword>
<accession>P75545</accession>
<feature type="chain" id="PRO_0000124303" description="Small ribosomal subunit protein uS7">
    <location>
        <begin position="1"/>
        <end position="155"/>
    </location>
</feature>
<feature type="turn" evidence="3">
    <location>
        <begin position="15"/>
        <end position="17"/>
    </location>
</feature>
<feature type="helix" evidence="3">
    <location>
        <begin position="20"/>
        <end position="29"/>
    </location>
</feature>
<feature type="helix" evidence="3">
    <location>
        <begin position="35"/>
        <end position="53"/>
    </location>
</feature>
<feature type="helix" evidence="3">
    <location>
        <begin position="57"/>
        <end position="68"/>
    </location>
</feature>
<feature type="strand" evidence="3">
    <location>
        <begin position="72"/>
        <end position="77"/>
    </location>
</feature>
<feature type="strand" evidence="3">
    <location>
        <begin position="79"/>
        <end position="82"/>
    </location>
</feature>
<feature type="strand" evidence="3">
    <location>
        <begin position="84"/>
        <end position="89"/>
    </location>
</feature>
<feature type="helix" evidence="3">
    <location>
        <begin position="92"/>
        <end position="107"/>
    </location>
</feature>
<feature type="strand" evidence="3">
    <location>
        <begin position="110"/>
        <end position="114"/>
    </location>
</feature>
<feature type="helix" evidence="3">
    <location>
        <begin position="115"/>
        <end position="126"/>
    </location>
</feature>
<feature type="turn" evidence="3">
    <location>
        <begin position="127"/>
        <end position="129"/>
    </location>
</feature>
<feature type="helix" evidence="3">
    <location>
        <begin position="132"/>
        <end position="146"/>
    </location>
</feature>
<feature type="helix" evidence="3">
    <location>
        <begin position="147"/>
        <end position="151"/>
    </location>
</feature>
<sequence length="155" mass="17863">MRKNRAPKRTVLPDPVFNNTLVTRIINVIMEDGKKGLAQRILYGAFDLIEQRTKEKPLTVFERAVGNVMPRLELRVRRIAGSNYQVPTEVPQDRKIALALRWIAMFARKRHEKTMLEKIANEIIDASNNTGAAIKKKDDTHKMAEANKAFAHMRW</sequence>
<evidence type="ECO:0000255" key="1">
    <source>
        <dbReference type="HAMAP-Rule" id="MF_00480"/>
    </source>
</evidence>
<evidence type="ECO:0000305" key="2"/>
<evidence type="ECO:0007829" key="3">
    <source>
        <dbReference type="PDB" id="8P6P"/>
    </source>
</evidence>
<gene>
    <name evidence="1" type="primary">rpsG</name>
    <name type="ordered locus">MPN_226</name>
    <name type="ORF">MP605</name>
</gene>
<proteinExistence type="evidence at protein level"/>